<evidence type="ECO:0000250" key="1"/>
<evidence type="ECO:0000255" key="2"/>
<evidence type="ECO:0000255" key="3">
    <source>
        <dbReference type="PROSITE-ProRule" id="PRU00107"/>
    </source>
</evidence>
<evidence type="ECO:0000305" key="4"/>
<organism>
    <name type="scientific">Staphylococcus aureus (strain MSSA476)</name>
    <dbReference type="NCBI Taxonomy" id="282459"/>
    <lineage>
        <taxon>Bacteria</taxon>
        <taxon>Bacillati</taxon>
        <taxon>Bacillota</taxon>
        <taxon>Bacilli</taxon>
        <taxon>Bacillales</taxon>
        <taxon>Staphylococcaceae</taxon>
        <taxon>Staphylococcus</taxon>
    </lineage>
</organism>
<sequence>MINEDSIQLDTLLKKYYEHSIEKIVFADDNGKIIAMNDAAKDILSEEDNYSAVANAICHRCEGYTNAYDVQSCKDCFLESMQVQATNFQVFMKTKDQKVMPFTATYQLIDQDRGIHAFTLQNVSSQIEQQEKLHQQRMMRKTISAQENERKRISRELHDSVIQEMLNVDVQLRLLKYQEDTTKLLEDAENIEYIVAKLIDDIRNMSVELRPASLDDLGLEAAFKSYFKQFEENYGIKIIYTSNIKNTRFDSDIETVVYRVVQEAILNALKYADVNEINVGIRQTGRHLVAEVIDAGNGFDPSSKPKGSGLGLYGMNERAELVSGSVNIETKIGEGTNVTLNIPI</sequence>
<proteinExistence type="inferred from homology"/>
<keyword id="KW-0004">4Fe-4S</keyword>
<keyword id="KW-0067">ATP-binding</keyword>
<keyword id="KW-0963">Cytoplasm</keyword>
<keyword id="KW-0408">Iron</keyword>
<keyword id="KW-0411">Iron-sulfur</keyword>
<keyword id="KW-0418">Kinase</keyword>
<keyword id="KW-0479">Metal-binding</keyword>
<keyword id="KW-0547">Nucleotide-binding</keyword>
<keyword id="KW-0597">Phosphoprotein</keyword>
<keyword id="KW-0808">Transferase</keyword>
<keyword id="KW-0902">Two-component regulatory system</keyword>
<protein>
    <recommendedName>
        <fullName>Oxygen sensor histidine kinase NreB</fullName>
        <ecNumber>2.7.13.3</ecNumber>
    </recommendedName>
    <alternativeName>
        <fullName>Nitrogen regulation protein B</fullName>
    </alternativeName>
</protein>
<feature type="chain" id="PRO_0000349329" description="Oxygen sensor histidine kinase NreB">
    <location>
        <begin position="1"/>
        <end position="344"/>
    </location>
</feature>
<feature type="domain" description="Histidine kinase" evidence="3">
    <location>
        <begin position="152"/>
        <end position="344"/>
    </location>
</feature>
<feature type="binding site" evidence="2">
    <location>
        <position position="58"/>
    </location>
    <ligand>
        <name>[4Fe-4S] cluster</name>
        <dbReference type="ChEBI" id="CHEBI:49883"/>
    </ligand>
</feature>
<feature type="binding site" evidence="2">
    <location>
        <position position="61"/>
    </location>
    <ligand>
        <name>[4Fe-4S] cluster</name>
        <dbReference type="ChEBI" id="CHEBI:49883"/>
    </ligand>
</feature>
<feature type="binding site" evidence="2">
    <location>
        <position position="73"/>
    </location>
    <ligand>
        <name>[4Fe-4S] cluster</name>
        <dbReference type="ChEBI" id="CHEBI:49883"/>
    </ligand>
</feature>
<feature type="binding site" evidence="2">
    <location>
        <position position="76"/>
    </location>
    <ligand>
        <name>[4Fe-4S] cluster</name>
        <dbReference type="ChEBI" id="CHEBI:49883"/>
    </ligand>
</feature>
<feature type="modified residue" description="Phosphohistidine; by autocatalysis" evidence="3">
    <location>
        <position position="158"/>
    </location>
</feature>
<reference key="1">
    <citation type="journal article" date="2004" name="Proc. Natl. Acad. Sci. U.S.A.">
        <title>Complete genomes of two clinical Staphylococcus aureus strains: evidence for the rapid evolution of virulence and drug resistance.</title>
        <authorList>
            <person name="Holden M.T.G."/>
            <person name="Feil E.J."/>
            <person name="Lindsay J.A."/>
            <person name="Peacock S.J."/>
            <person name="Day N.P.J."/>
            <person name="Enright M.C."/>
            <person name="Foster T.J."/>
            <person name="Moore C.E."/>
            <person name="Hurst L."/>
            <person name="Atkin R."/>
            <person name="Barron A."/>
            <person name="Bason N."/>
            <person name="Bentley S.D."/>
            <person name="Chillingworth C."/>
            <person name="Chillingworth T."/>
            <person name="Churcher C."/>
            <person name="Clark L."/>
            <person name="Corton C."/>
            <person name="Cronin A."/>
            <person name="Doggett J."/>
            <person name="Dowd L."/>
            <person name="Feltwell T."/>
            <person name="Hance Z."/>
            <person name="Harris B."/>
            <person name="Hauser H."/>
            <person name="Holroyd S."/>
            <person name="Jagels K."/>
            <person name="James K.D."/>
            <person name="Lennard N."/>
            <person name="Line A."/>
            <person name="Mayes R."/>
            <person name="Moule S."/>
            <person name="Mungall K."/>
            <person name="Ormond D."/>
            <person name="Quail M.A."/>
            <person name="Rabbinowitsch E."/>
            <person name="Rutherford K.M."/>
            <person name="Sanders M."/>
            <person name="Sharp S."/>
            <person name="Simmonds M."/>
            <person name="Stevens K."/>
            <person name="Whitehead S."/>
            <person name="Barrell B.G."/>
            <person name="Spratt B.G."/>
            <person name="Parkhill J."/>
        </authorList>
    </citation>
    <scope>NUCLEOTIDE SEQUENCE [LARGE SCALE GENOMIC DNA]</scope>
    <source>
        <strain>MSSA476</strain>
    </source>
</reference>
<gene>
    <name type="primary">nreB</name>
    <name type="ordered locus">SAS2283</name>
</gene>
<dbReference type="EC" id="2.7.13.3"/>
<dbReference type="EMBL" id="BX571857">
    <property type="protein sequence ID" value="CAG44096.1"/>
    <property type="molecule type" value="Genomic_DNA"/>
</dbReference>
<dbReference type="RefSeq" id="WP_000606546.1">
    <property type="nucleotide sequence ID" value="NC_002953.3"/>
</dbReference>
<dbReference type="SMR" id="Q6G6S9"/>
<dbReference type="KEGG" id="sas:SAS2283"/>
<dbReference type="HOGENOM" id="CLU_000445_114_0_9"/>
<dbReference type="GO" id="GO:0005737">
    <property type="term" value="C:cytoplasm"/>
    <property type="evidence" value="ECO:0007669"/>
    <property type="project" value="UniProtKB-SubCell"/>
</dbReference>
<dbReference type="GO" id="GO:0016020">
    <property type="term" value="C:membrane"/>
    <property type="evidence" value="ECO:0007669"/>
    <property type="project" value="InterPro"/>
</dbReference>
<dbReference type="GO" id="GO:0051539">
    <property type="term" value="F:4 iron, 4 sulfur cluster binding"/>
    <property type="evidence" value="ECO:0007669"/>
    <property type="project" value="UniProtKB-KW"/>
</dbReference>
<dbReference type="GO" id="GO:0005524">
    <property type="term" value="F:ATP binding"/>
    <property type="evidence" value="ECO:0007669"/>
    <property type="project" value="UniProtKB-KW"/>
</dbReference>
<dbReference type="GO" id="GO:0005506">
    <property type="term" value="F:iron ion binding"/>
    <property type="evidence" value="ECO:0007669"/>
    <property type="project" value="InterPro"/>
</dbReference>
<dbReference type="GO" id="GO:0000155">
    <property type="term" value="F:phosphorelay sensor kinase activity"/>
    <property type="evidence" value="ECO:0007669"/>
    <property type="project" value="InterPro"/>
</dbReference>
<dbReference type="GO" id="GO:0046983">
    <property type="term" value="F:protein dimerization activity"/>
    <property type="evidence" value="ECO:0007669"/>
    <property type="project" value="InterPro"/>
</dbReference>
<dbReference type="CDD" id="cd16917">
    <property type="entry name" value="HATPase_UhpB-NarQ-NarX-like"/>
    <property type="match status" value="1"/>
</dbReference>
<dbReference type="Gene3D" id="1.20.5.1930">
    <property type="match status" value="1"/>
</dbReference>
<dbReference type="Gene3D" id="3.30.565.10">
    <property type="entry name" value="Histidine kinase-like ATPase, C-terminal domain"/>
    <property type="match status" value="1"/>
</dbReference>
<dbReference type="InterPro" id="IPR036890">
    <property type="entry name" value="HATPase_C_sf"/>
</dbReference>
<dbReference type="InterPro" id="IPR005467">
    <property type="entry name" value="His_kinase_dom"/>
</dbReference>
<dbReference type="InterPro" id="IPR050482">
    <property type="entry name" value="Sensor_HK_TwoCompSys"/>
</dbReference>
<dbReference type="InterPro" id="IPR004358">
    <property type="entry name" value="Sig_transdc_His_kin-like_C"/>
</dbReference>
<dbReference type="InterPro" id="IPR011712">
    <property type="entry name" value="Sig_transdc_His_kin_sub3_dim/P"/>
</dbReference>
<dbReference type="InterPro" id="IPR017203">
    <property type="entry name" value="Sig_transdc_His_kinase_NreB"/>
</dbReference>
<dbReference type="PANTHER" id="PTHR24421">
    <property type="entry name" value="NITRATE/NITRITE SENSOR PROTEIN NARX-RELATED"/>
    <property type="match status" value="1"/>
</dbReference>
<dbReference type="PANTHER" id="PTHR24421:SF10">
    <property type="entry name" value="NITRATE_NITRITE SENSOR PROTEIN NARQ"/>
    <property type="match status" value="1"/>
</dbReference>
<dbReference type="Pfam" id="PF02518">
    <property type="entry name" value="HATPase_c"/>
    <property type="match status" value="1"/>
</dbReference>
<dbReference type="Pfam" id="PF07730">
    <property type="entry name" value="HisKA_3"/>
    <property type="match status" value="1"/>
</dbReference>
<dbReference type="PIRSF" id="PIRSF037432">
    <property type="entry name" value="STHK_NreB"/>
    <property type="match status" value="1"/>
</dbReference>
<dbReference type="PRINTS" id="PR00344">
    <property type="entry name" value="BCTRLSENSOR"/>
</dbReference>
<dbReference type="SMART" id="SM00387">
    <property type="entry name" value="HATPase_c"/>
    <property type="match status" value="1"/>
</dbReference>
<dbReference type="SUPFAM" id="SSF55874">
    <property type="entry name" value="ATPase domain of HSP90 chaperone/DNA topoisomerase II/histidine kinase"/>
    <property type="match status" value="1"/>
</dbReference>
<dbReference type="PROSITE" id="PS50109">
    <property type="entry name" value="HIS_KIN"/>
    <property type="match status" value="1"/>
</dbReference>
<name>NREB_STAAS</name>
<comment type="function">
    <text evidence="1">Member of the two-component regulatory system NreB/NreC involved in the control of dissimilatory nitrate/nitrite reduction in response to oxygen. NreB functions as a direct oxygen sensor histidine kinase which is autophosphorylated, in the absence of oxygen, probably at the conserved histidine residue, and transfers its phosphate group probably to a conserved aspartate residue of NreC. NreB/NreC activates the expression of the nitrate (narGHJI) and nitrite (nir) reductase operons, as well as the putative nitrate transporter gene narT (By similarity).</text>
</comment>
<comment type="catalytic activity">
    <reaction>
        <text>ATP + protein L-histidine = ADP + protein N-phospho-L-histidine.</text>
        <dbReference type="EC" id="2.7.13.3"/>
    </reaction>
</comment>
<comment type="cofactor">
    <cofactor evidence="4">
        <name>[4Fe-4S] cluster</name>
        <dbReference type="ChEBI" id="CHEBI:49883"/>
    </cofactor>
    <text evidence="4">Binds 1 [4Fe-4S] cluster.</text>
</comment>
<comment type="subcellular location">
    <subcellularLocation>
        <location evidence="4">Cytoplasm</location>
    </subcellularLocation>
</comment>
<comment type="PTM">
    <text evidence="1">Autophosphorylated.</text>
</comment>
<accession>Q6G6S9</accession>